<gene>
    <name evidence="3" type="ordered locus">At4g00610</name>
    <name evidence="4" type="ORF">F6N23.29</name>
</gene>
<reference key="1">
    <citation type="journal article" date="1999" name="Nature">
        <title>Sequence and analysis of chromosome 4 of the plant Arabidopsis thaliana.</title>
        <authorList>
            <person name="Mayer K.F.X."/>
            <person name="Schueller C."/>
            <person name="Wambutt R."/>
            <person name="Murphy G."/>
            <person name="Volckaert G."/>
            <person name="Pohl T."/>
            <person name="Duesterhoeft A."/>
            <person name="Stiekema W."/>
            <person name="Entian K.-D."/>
            <person name="Terryn N."/>
            <person name="Harris B."/>
            <person name="Ansorge W."/>
            <person name="Brandt P."/>
            <person name="Grivell L.A."/>
            <person name="Rieger M."/>
            <person name="Weichselgartner M."/>
            <person name="de Simone V."/>
            <person name="Obermaier B."/>
            <person name="Mache R."/>
            <person name="Mueller M."/>
            <person name="Kreis M."/>
            <person name="Delseny M."/>
            <person name="Puigdomenech P."/>
            <person name="Watson M."/>
            <person name="Schmidtheini T."/>
            <person name="Reichert B."/>
            <person name="Portetelle D."/>
            <person name="Perez-Alonso M."/>
            <person name="Boutry M."/>
            <person name="Bancroft I."/>
            <person name="Vos P."/>
            <person name="Hoheisel J."/>
            <person name="Zimmermann W."/>
            <person name="Wedler H."/>
            <person name="Ridley P."/>
            <person name="Langham S.-A."/>
            <person name="McCullagh B."/>
            <person name="Bilham L."/>
            <person name="Robben J."/>
            <person name="van der Schueren J."/>
            <person name="Grymonprez B."/>
            <person name="Chuang Y.-J."/>
            <person name="Vandenbussche F."/>
            <person name="Braeken M."/>
            <person name="Weltjens I."/>
            <person name="Voet M."/>
            <person name="Bastiaens I."/>
            <person name="Aert R."/>
            <person name="Defoor E."/>
            <person name="Weitzenegger T."/>
            <person name="Bothe G."/>
            <person name="Ramsperger U."/>
            <person name="Hilbert H."/>
            <person name="Braun M."/>
            <person name="Holzer E."/>
            <person name="Brandt A."/>
            <person name="Peters S."/>
            <person name="van Staveren M."/>
            <person name="Dirkse W."/>
            <person name="Mooijman P."/>
            <person name="Klein Lankhorst R."/>
            <person name="Rose M."/>
            <person name="Hauf J."/>
            <person name="Koetter P."/>
            <person name="Berneiser S."/>
            <person name="Hempel S."/>
            <person name="Feldpausch M."/>
            <person name="Lamberth S."/>
            <person name="Van den Daele H."/>
            <person name="De Keyser A."/>
            <person name="Buysshaert C."/>
            <person name="Gielen J."/>
            <person name="Villarroel R."/>
            <person name="De Clercq R."/>
            <person name="van Montagu M."/>
            <person name="Rogers J."/>
            <person name="Cronin A."/>
            <person name="Quail M.A."/>
            <person name="Bray-Allen S."/>
            <person name="Clark L."/>
            <person name="Doggett J."/>
            <person name="Hall S."/>
            <person name="Kay M."/>
            <person name="Lennard N."/>
            <person name="McLay K."/>
            <person name="Mayes R."/>
            <person name="Pettett A."/>
            <person name="Rajandream M.A."/>
            <person name="Lyne M."/>
            <person name="Benes V."/>
            <person name="Rechmann S."/>
            <person name="Borkova D."/>
            <person name="Bloecker H."/>
            <person name="Scharfe M."/>
            <person name="Grimm M."/>
            <person name="Loehnert T.-H."/>
            <person name="Dose S."/>
            <person name="de Haan M."/>
            <person name="Maarse A.C."/>
            <person name="Schaefer M."/>
            <person name="Mueller-Auer S."/>
            <person name="Gabel C."/>
            <person name="Fuchs M."/>
            <person name="Fartmann B."/>
            <person name="Granderath K."/>
            <person name="Dauner D."/>
            <person name="Herzl A."/>
            <person name="Neumann S."/>
            <person name="Argiriou A."/>
            <person name="Vitale D."/>
            <person name="Liguori R."/>
            <person name="Piravandi E."/>
            <person name="Massenet O."/>
            <person name="Quigley F."/>
            <person name="Clabauld G."/>
            <person name="Muendlein A."/>
            <person name="Felber R."/>
            <person name="Schnabl S."/>
            <person name="Hiller R."/>
            <person name="Schmidt W."/>
            <person name="Lecharny A."/>
            <person name="Aubourg S."/>
            <person name="Chefdor F."/>
            <person name="Cooke R."/>
            <person name="Berger C."/>
            <person name="Monfort A."/>
            <person name="Casacuberta E."/>
            <person name="Gibbons T."/>
            <person name="Weber N."/>
            <person name="Vandenbol M."/>
            <person name="Bargues M."/>
            <person name="Terol J."/>
            <person name="Torres A."/>
            <person name="Perez-Perez A."/>
            <person name="Purnelle B."/>
            <person name="Bent E."/>
            <person name="Johnson S."/>
            <person name="Tacon D."/>
            <person name="Jesse T."/>
            <person name="Heijnen L."/>
            <person name="Schwarz S."/>
            <person name="Scholler P."/>
            <person name="Heber S."/>
            <person name="Francs P."/>
            <person name="Bielke C."/>
            <person name="Frishman D."/>
            <person name="Haase D."/>
            <person name="Lemcke K."/>
            <person name="Mewes H.-W."/>
            <person name="Stocker S."/>
            <person name="Zaccaria P."/>
            <person name="Bevan M."/>
            <person name="Wilson R.K."/>
            <person name="de la Bastide M."/>
            <person name="Habermann K."/>
            <person name="Parnell L."/>
            <person name="Dedhia N."/>
            <person name="Gnoj L."/>
            <person name="Schutz K."/>
            <person name="Huang E."/>
            <person name="Spiegel L."/>
            <person name="Sekhon M."/>
            <person name="Murray J."/>
            <person name="Sheet P."/>
            <person name="Cordes M."/>
            <person name="Abu-Threideh J."/>
            <person name="Stoneking T."/>
            <person name="Kalicki J."/>
            <person name="Graves T."/>
            <person name="Harmon G."/>
            <person name="Edwards J."/>
            <person name="Latreille P."/>
            <person name="Courtney L."/>
            <person name="Cloud J."/>
            <person name="Abbott A."/>
            <person name="Scott K."/>
            <person name="Johnson D."/>
            <person name="Minx P."/>
            <person name="Bentley D."/>
            <person name="Fulton B."/>
            <person name="Miller N."/>
            <person name="Greco T."/>
            <person name="Kemp K."/>
            <person name="Kramer J."/>
            <person name="Fulton L."/>
            <person name="Mardis E."/>
            <person name="Dante M."/>
            <person name="Pepin K."/>
            <person name="Hillier L.W."/>
            <person name="Nelson J."/>
            <person name="Spieth J."/>
            <person name="Ryan E."/>
            <person name="Andrews S."/>
            <person name="Geisel C."/>
            <person name="Layman D."/>
            <person name="Du H."/>
            <person name="Ali J."/>
            <person name="Berghoff A."/>
            <person name="Jones K."/>
            <person name="Drone K."/>
            <person name="Cotton M."/>
            <person name="Joshu C."/>
            <person name="Antonoiu B."/>
            <person name="Zidanic M."/>
            <person name="Strong C."/>
            <person name="Sun H."/>
            <person name="Lamar B."/>
            <person name="Yordan C."/>
            <person name="Ma P."/>
            <person name="Zhong J."/>
            <person name="Preston R."/>
            <person name="Vil D."/>
            <person name="Shekher M."/>
            <person name="Matero A."/>
            <person name="Shah R."/>
            <person name="Swaby I.K."/>
            <person name="O'Shaughnessy A."/>
            <person name="Rodriguez M."/>
            <person name="Hoffman J."/>
            <person name="Till S."/>
            <person name="Granat S."/>
            <person name="Shohdy N."/>
            <person name="Hasegawa A."/>
            <person name="Hameed A."/>
            <person name="Lodhi M."/>
            <person name="Johnson A."/>
            <person name="Chen E."/>
            <person name="Marra M.A."/>
            <person name="Martienssen R."/>
            <person name="McCombie W.R."/>
        </authorList>
    </citation>
    <scope>NUCLEOTIDE SEQUENCE [LARGE SCALE GENOMIC DNA]</scope>
    <source>
        <strain>cv. Columbia</strain>
    </source>
</reference>
<reference key="2">
    <citation type="journal article" date="2017" name="Plant J.">
        <title>Araport11: a complete reannotation of the Arabidopsis thaliana reference genome.</title>
        <authorList>
            <person name="Cheng C.Y."/>
            <person name="Krishnakumar V."/>
            <person name="Chan A.P."/>
            <person name="Thibaud-Nissen F."/>
            <person name="Schobel S."/>
            <person name="Town C.D."/>
        </authorList>
    </citation>
    <scope>GENOME REANNOTATION</scope>
    <source>
        <strain>cv. Columbia</strain>
    </source>
</reference>
<reference key="3">
    <citation type="submission" date="2009-03" db="EMBL/GenBank/DDBJ databases">
        <title>ORF cloning and analysis of Arabidopsis transcription factor genes.</title>
        <authorList>
            <person name="Fujita M."/>
            <person name="Mizukado S."/>
            <person name="Seki M."/>
            <person name="Shinozaki K."/>
            <person name="Mitsuda N."/>
            <person name="Takiguchi Y."/>
            <person name="Takagi M."/>
        </authorList>
    </citation>
    <scope>NUCLEOTIDE SEQUENCE [LARGE SCALE GENOMIC DNA]</scope>
</reference>
<reference key="4">
    <citation type="journal article" date="2003" name="Plant J.">
        <title>GeBP, the first member of a new gene family in Arabidopsis, encodes a nuclear protein with DNA-binding activity and is regulated by KNAT1.</title>
        <authorList>
            <person name="Curaba J."/>
            <person name="Herzog M."/>
            <person name="Vachon G."/>
        </authorList>
    </citation>
    <scope>GENE FAMILY</scope>
</reference>
<reference key="5">
    <citation type="journal article" date="2016" name="Plant Physiol. Biochem.">
        <title>Regulation of Arabidopsis thaliana plasma membrane glucose-responsive regulator (AtPGR) expression by A. thaliana storekeeper-like transcription factor, AtSTKL, modulates glucose response in Arabidopsis.</title>
        <authorList>
            <person name="Chung M.S."/>
            <person name="Lee S."/>
            <person name="Min J.H."/>
            <person name="Huang P."/>
            <person name="Ju H.W."/>
            <person name="Kim C.S."/>
        </authorList>
    </citation>
    <scope>GENE FAMILY</scope>
</reference>
<dbReference type="EMBL" id="AF058919">
    <property type="protein sequence ID" value="AAC13633.1"/>
    <property type="molecule type" value="Genomic_DNA"/>
</dbReference>
<dbReference type="EMBL" id="AL161472">
    <property type="protein sequence ID" value="CAB80870.1"/>
    <property type="molecule type" value="Genomic_DNA"/>
</dbReference>
<dbReference type="EMBL" id="CP002687">
    <property type="protein sequence ID" value="AEE81909.1"/>
    <property type="molecule type" value="Genomic_DNA"/>
</dbReference>
<dbReference type="EMBL" id="AB493665">
    <property type="protein sequence ID" value="BAH30503.1"/>
    <property type="molecule type" value="Genomic_DNA"/>
</dbReference>
<dbReference type="PIR" id="T01225">
    <property type="entry name" value="T01225"/>
</dbReference>
<dbReference type="RefSeq" id="NP_191970.1">
    <property type="nucleotide sequence ID" value="NM_116286.1"/>
</dbReference>
<dbReference type="SMR" id="O65270"/>
<dbReference type="IntAct" id="O65270">
    <property type="interactions" value="4"/>
</dbReference>
<dbReference type="STRING" id="3702.O65270"/>
<dbReference type="PaxDb" id="3702-AT4G00610.1"/>
<dbReference type="EnsemblPlants" id="AT4G00610.1">
    <property type="protein sequence ID" value="AT4G00610.1"/>
    <property type="gene ID" value="AT4G00610"/>
</dbReference>
<dbReference type="GeneID" id="827994"/>
<dbReference type="Gramene" id="AT4G00610.1">
    <property type="protein sequence ID" value="AT4G00610.1"/>
    <property type="gene ID" value="AT4G00610"/>
</dbReference>
<dbReference type="KEGG" id="ath:AT4G00610"/>
<dbReference type="Araport" id="AT4G00610"/>
<dbReference type="TAIR" id="AT4G00610"/>
<dbReference type="HOGENOM" id="CLU_858819_0_0_1"/>
<dbReference type="InParanoid" id="O65270"/>
<dbReference type="OMA" id="ELANMIW"/>
<dbReference type="PhylomeDB" id="O65270"/>
<dbReference type="PRO" id="PR:O65270"/>
<dbReference type="Proteomes" id="UP000006548">
    <property type="component" value="Chromosome 4"/>
</dbReference>
<dbReference type="ExpressionAtlas" id="O65270">
    <property type="expression patterns" value="baseline"/>
</dbReference>
<dbReference type="GO" id="GO:0006355">
    <property type="term" value="P:regulation of DNA-templated transcription"/>
    <property type="evidence" value="ECO:0000304"/>
    <property type="project" value="TAIR"/>
</dbReference>
<dbReference type="InterPro" id="IPR007592">
    <property type="entry name" value="GEBP"/>
</dbReference>
<dbReference type="InterPro" id="IPR053933">
    <property type="entry name" value="GeBP-like_C"/>
</dbReference>
<dbReference type="InterPro" id="IPR053932">
    <property type="entry name" value="GeBP-like_DBD"/>
</dbReference>
<dbReference type="PANTHER" id="PTHR31662">
    <property type="entry name" value="BNAANNG10740D PROTEIN-RELATED"/>
    <property type="match status" value="1"/>
</dbReference>
<dbReference type="PANTHER" id="PTHR31662:SF68">
    <property type="entry name" value="DNA-BINDING STOREKEEPER PROTEIN TRANSCRIPTIONAL REGULATOR-LIKE PROTEIN-RELATED"/>
    <property type="match status" value="1"/>
</dbReference>
<dbReference type="Pfam" id="PF22757">
    <property type="entry name" value="GeBP-like_C"/>
    <property type="match status" value="1"/>
</dbReference>
<dbReference type="Pfam" id="PF04504">
    <property type="entry name" value="GeBP-like_DBD"/>
    <property type="match status" value="1"/>
</dbReference>
<feature type="chain" id="PRO_0000436991" description="Probable transcription factor At4g00610">
    <location>
        <begin position="1"/>
        <end position="328"/>
    </location>
</feature>
<feature type="region of interest" description="Disordered" evidence="1">
    <location>
        <begin position="31"/>
        <end position="143"/>
    </location>
</feature>
<feature type="compositionally biased region" description="Polar residues" evidence="1">
    <location>
        <begin position="35"/>
        <end position="54"/>
    </location>
</feature>
<feature type="compositionally biased region" description="Acidic residues" evidence="1">
    <location>
        <begin position="84"/>
        <end position="108"/>
    </location>
</feature>
<feature type="compositionally biased region" description="Basic and acidic residues" evidence="1">
    <location>
        <begin position="122"/>
        <end position="143"/>
    </location>
</feature>
<protein>
    <recommendedName>
        <fullName evidence="2">Probable transcription factor At4g00610</fullName>
    </recommendedName>
    <alternativeName>
        <fullName evidence="2">Storekeeper-like protein At4g00610</fullName>
    </alternativeName>
</protein>
<sequence length="328" mass="37058">MVSVQNLKTDQLLNFLFKNPTKFLSRFSPMAKNKTLVTPSTVKKSSDVASTSKKLSGVASPAKKPSGVTSPVKKPLEAVASTSSEEEEEDEPSSDSESGSESESDTEAEPMTLAAAAPSSSNEKRQSEGKPEEERAKTETETGKKPLLFQRLWTDEDEIVFLQGMIKFAKDTGKNVSEDMNGFFEKLKDSISFEVKTDQFVNKIRSMKRKYIENKKTTTEHDKKCYELAEIIWVSDGDATALVKPKKKKLKVDEESDWFERSFVDGAFKELGPGVDEETWKKNWSLVPVKKRKRIEEKVKSMQADELKTTWQKIDVVHEMRSLMAKYV</sequence>
<accession>O65270</accession>
<keyword id="KW-1185">Reference proteome</keyword>
<keyword id="KW-0804">Transcription</keyword>
<keyword id="KW-0805">Transcription regulation</keyword>
<name>STKLQ_ARATH</name>
<evidence type="ECO:0000256" key="1">
    <source>
        <dbReference type="SAM" id="MobiDB-lite"/>
    </source>
</evidence>
<evidence type="ECO:0000305" key="2"/>
<evidence type="ECO:0000312" key="3">
    <source>
        <dbReference type="Araport" id="AT4G00610"/>
    </source>
</evidence>
<evidence type="ECO:0000312" key="4">
    <source>
        <dbReference type="EMBL" id="AAC13633.1"/>
    </source>
</evidence>
<organism>
    <name type="scientific">Arabidopsis thaliana</name>
    <name type="common">Mouse-ear cress</name>
    <dbReference type="NCBI Taxonomy" id="3702"/>
    <lineage>
        <taxon>Eukaryota</taxon>
        <taxon>Viridiplantae</taxon>
        <taxon>Streptophyta</taxon>
        <taxon>Embryophyta</taxon>
        <taxon>Tracheophyta</taxon>
        <taxon>Spermatophyta</taxon>
        <taxon>Magnoliopsida</taxon>
        <taxon>eudicotyledons</taxon>
        <taxon>Gunneridae</taxon>
        <taxon>Pentapetalae</taxon>
        <taxon>rosids</taxon>
        <taxon>malvids</taxon>
        <taxon>Brassicales</taxon>
        <taxon>Brassicaceae</taxon>
        <taxon>Camelineae</taxon>
        <taxon>Arabidopsis</taxon>
    </lineage>
</organism>
<comment type="similarity">
    <text evidence="2">Belongs to the GeBP family.</text>
</comment>
<comment type="online information" name="Plant Transcription Factor Database">
    <link uri="https://planttfdb.gao-lab.org/family.php?fam=GeBP#family_intro"/>
</comment>
<proteinExistence type="inferred from homology"/>